<protein>
    <recommendedName>
        <fullName evidence="1">Mitochondrial distribution and morphology protein 34</fullName>
    </recommendedName>
</protein>
<evidence type="ECO:0000255" key="1">
    <source>
        <dbReference type="HAMAP-Rule" id="MF_03105"/>
    </source>
</evidence>
<evidence type="ECO:0000256" key="2">
    <source>
        <dbReference type="SAM" id="MobiDB-lite"/>
    </source>
</evidence>
<accession>C1G520</accession>
<proteinExistence type="inferred from homology"/>
<feature type="chain" id="PRO_0000384353" description="Mitochondrial distribution and morphology protein 34">
    <location>
        <begin position="1"/>
        <end position="611"/>
    </location>
</feature>
<feature type="domain" description="SMP-LTD" evidence="1">
    <location>
        <begin position="1"/>
        <end position="195"/>
    </location>
</feature>
<feature type="region of interest" description="Disordered" evidence="2">
    <location>
        <begin position="325"/>
        <end position="347"/>
    </location>
</feature>
<feature type="region of interest" description="Disordered" evidence="2">
    <location>
        <begin position="361"/>
        <end position="402"/>
    </location>
</feature>
<feature type="region of interest" description="Disordered" evidence="2">
    <location>
        <begin position="415"/>
        <end position="544"/>
    </location>
</feature>
<feature type="region of interest" description="Disordered" evidence="2">
    <location>
        <begin position="587"/>
        <end position="611"/>
    </location>
</feature>
<feature type="compositionally biased region" description="Polar residues" evidence="2">
    <location>
        <begin position="325"/>
        <end position="342"/>
    </location>
</feature>
<feature type="compositionally biased region" description="Basic residues" evidence="2">
    <location>
        <begin position="361"/>
        <end position="373"/>
    </location>
</feature>
<feature type="compositionally biased region" description="Basic and acidic residues" evidence="2">
    <location>
        <begin position="374"/>
        <end position="385"/>
    </location>
</feature>
<feature type="compositionally biased region" description="Basic and acidic residues" evidence="2">
    <location>
        <begin position="444"/>
        <end position="459"/>
    </location>
</feature>
<feature type="compositionally biased region" description="Pro residues" evidence="2">
    <location>
        <begin position="520"/>
        <end position="529"/>
    </location>
</feature>
<gene>
    <name evidence="1" type="primary">MDM34</name>
    <name type="ORF">PADG_02036</name>
</gene>
<comment type="function">
    <text evidence="1">Component of the ERMES/MDM complex, which serves as a molecular tether to connect the endoplasmic reticulum (ER) and mitochondria. Components of this complex are involved in the control of mitochondrial shape and protein biogenesis, and function in nonvesicular lipid trafficking between the ER and mitochondria. MDM34 is required for the interaction of the ER-resident membrane protein MMM1 and the outer mitochondrial membrane-resident beta-barrel protein MDM10.</text>
</comment>
<comment type="subunit">
    <text evidence="1">Component of the ER-mitochondria encounter structure (ERMES) or MDM complex, composed of MMM1, MDM10, MDM12 and MDM34.</text>
</comment>
<comment type="subcellular location">
    <subcellularLocation>
        <location evidence="1">Mitochondrion outer membrane</location>
        <topology evidence="1">Multi-pass membrane protein</topology>
    </subcellularLocation>
    <text evidence="1">The ERMES/MDM complex localizes to a few discrete foci (around 10 per single cell), that represent mitochondria-endoplasmic reticulum junctions. These foci are often found next to mtDNA nucleoids.</text>
</comment>
<comment type="domain">
    <text evidence="1">Lacks alpha-helical transmembrane segments, suggesting that it resides in the membrane via beta-sheet conformations similar to those predicted for other outer membrane proteins and porin.</text>
</comment>
<comment type="domain">
    <text evidence="1">The SMP-LTD domain is a barrel-like domain that can bind various types of glycerophospholipids in its interior and mediate their transfer between two adjacent bilayers.</text>
</comment>
<comment type="similarity">
    <text evidence="1">Belongs to the MDM34 family.</text>
</comment>
<name>MDM34_PARBD</name>
<reference key="1">
    <citation type="journal article" date="2011" name="PLoS Genet.">
        <title>Comparative genomic analysis of human fungal pathogens causing paracoccidioidomycosis.</title>
        <authorList>
            <person name="Desjardins C.A."/>
            <person name="Champion M.D."/>
            <person name="Holder J.W."/>
            <person name="Muszewska A."/>
            <person name="Goldberg J."/>
            <person name="Bailao A.M."/>
            <person name="Brigido M.M."/>
            <person name="Ferreira M.E."/>
            <person name="Garcia A.M."/>
            <person name="Grynberg M."/>
            <person name="Gujja S."/>
            <person name="Heiman D.I."/>
            <person name="Henn M.R."/>
            <person name="Kodira C.D."/>
            <person name="Leon-Narvaez H."/>
            <person name="Longo L.V.G."/>
            <person name="Ma L.-J."/>
            <person name="Malavazi I."/>
            <person name="Matsuo A.L."/>
            <person name="Morais F.V."/>
            <person name="Pereira M."/>
            <person name="Rodriguez-Brito S."/>
            <person name="Sakthikumar S."/>
            <person name="Salem-Izacc S.M."/>
            <person name="Sykes S.M."/>
            <person name="Teixeira M.M."/>
            <person name="Vallejo M.C."/>
            <person name="Walter M.E."/>
            <person name="Yandava C."/>
            <person name="Young S."/>
            <person name="Zeng Q."/>
            <person name="Zucker J."/>
            <person name="Felipe M.S."/>
            <person name="Goldman G.H."/>
            <person name="Haas B.J."/>
            <person name="McEwen J.G."/>
            <person name="Nino-Vega G."/>
            <person name="Puccia R."/>
            <person name="San-Blas G."/>
            <person name="Soares C.M."/>
            <person name="Birren B.W."/>
            <person name="Cuomo C.A."/>
        </authorList>
    </citation>
    <scope>NUCLEOTIDE SEQUENCE [LARGE SCALE GENOMIC DNA]</scope>
    <source>
        <strain>Pb18</strain>
    </source>
</reference>
<organism>
    <name type="scientific">Paracoccidioides brasiliensis (strain Pb18)</name>
    <dbReference type="NCBI Taxonomy" id="502780"/>
    <lineage>
        <taxon>Eukaryota</taxon>
        <taxon>Fungi</taxon>
        <taxon>Dikarya</taxon>
        <taxon>Ascomycota</taxon>
        <taxon>Pezizomycotina</taxon>
        <taxon>Eurotiomycetes</taxon>
        <taxon>Eurotiomycetidae</taxon>
        <taxon>Onygenales</taxon>
        <taxon>Ajellomycetaceae</taxon>
        <taxon>Paracoccidioides</taxon>
    </lineage>
</organism>
<dbReference type="EMBL" id="KN275958">
    <property type="protein sequence ID" value="EEH45886.1"/>
    <property type="molecule type" value="Genomic_DNA"/>
</dbReference>
<dbReference type="RefSeq" id="XP_010757680.1">
    <property type="nucleotide sequence ID" value="XM_010759378.1"/>
</dbReference>
<dbReference type="SMR" id="C1G520"/>
<dbReference type="STRING" id="502780.C1G520"/>
<dbReference type="GeneID" id="22581589"/>
<dbReference type="KEGG" id="pbn:PADG_02036"/>
<dbReference type="VEuPathDB" id="FungiDB:PADG_02036"/>
<dbReference type="eggNOG" id="ENOG502QT3W">
    <property type="taxonomic scope" value="Eukaryota"/>
</dbReference>
<dbReference type="HOGENOM" id="CLU_036502_1_0_1"/>
<dbReference type="InParanoid" id="C1G520"/>
<dbReference type="OMA" id="VFRAWSG"/>
<dbReference type="OrthoDB" id="36141at33183"/>
<dbReference type="Proteomes" id="UP000001628">
    <property type="component" value="Unassembled WGS sequence"/>
</dbReference>
<dbReference type="GO" id="GO:0032865">
    <property type="term" value="C:ERMES complex"/>
    <property type="evidence" value="ECO:0007669"/>
    <property type="project" value="UniProtKB-UniRule"/>
</dbReference>
<dbReference type="GO" id="GO:0008289">
    <property type="term" value="F:lipid binding"/>
    <property type="evidence" value="ECO:0007669"/>
    <property type="project" value="UniProtKB-KW"/>
</dbReference>
<dbReference type="GO" id="GO:0000002">
    <property type="term" value="P:mitochondrial genome maintenance"/>
    <property type="evidence" value="ECO:0007669"/>
    <property type="project" value="UniProtKB-UniRule"/>
</dbReference>
<dbReference type="GO" id="GO:1990456">
    <property type="term" value="P:mitochondrion-endoplasmic reticulum membrane tethering"/>
    <property type="evidence" value="ECO:0007669"/>
    <property type="project" value="TreeGrafter"/>
</dbReference>
<dbReference type="GO" id="GO:0015914">
    <property type="term" value="P:phospholipid transport"/>
    <property type="evidence" value="ECO:0007669"/>
    <property type="project" value="TreeGrafter"/>
</dbReference>
<dbReference type="CDD" id="cd21673">
    <property type="entry name" value="SMP_Mdm34"/>
    <property type="match status" value="1"/>
</dbReference>
<dbReference type="HAMAP" id="MF_03105">
    <property type="entry name" value="Mdm34"/>
    <property type="match status" value="1"/>
</dbReference>
<dbReference type="InterPro" id="IPR027536">
    <property type="entry name" value="Mdm34"/>
</dbReference>
<dbReference type="InterPro" id="IPR031468">
    <property type="entry name" value="SMP_LBD"/>
</dbReference>
<dbReference type="PANTHER" id="PTHR28185">
    <property type="entry name" value="MITOCHONDRIAL DISTRIBUTION AND MORPHOLOGY PROTEIN 34"/>
    <property type="match status" value="1"/>
</dbReference>
<dbReference type="PANTHER" id="PTHR28185:SF1">
    <property type="entry name" value="MITOCHONDRIAL DISTRIBUTION AND MORPHOLOGY PROTEIN 34"/>
    <property type="match status" value="1"/>
</dbReference>
<dbReference type="PROSITE" id="PS51847">
    <property type="entry name" value="SMP"/>
    <property type="match status" value="1"/>
</dbReference>
<sequence>MAFNFNWSPLMADAGFYTRAQDLLTAALNKSPKPPIIVDDIVVTELNLGSNPPELEILEIGDLAEDRFRGIFKMSYAGDAVLTLKTCVQANPLNTYLLTRHPFTSPQPLAAATGLTIPLQITLSDIKLSGFVILVFSKQKGITVVFRNDPLESLKVSSTFDSIPFVRDYLQKEIEGQLRILFMDELPAIIHRLSLRLWSTEYSELETTCDQVTNPSLEGPGQDPLLNPPQDPVDSFGNVLSISEIASLSLDSGVEMHSLFSRKNALRIAALTDSQRTLSLFTPSIREVVFRAWTGSIEQADGPSGLVSPMSPPLSRTQSHITVASAPLSSQDTASVASSQSRPGLPSSGYSGYGLSLGAARHSKAHARKRKKRVIDLRPHRKPTDDMASISGESSCTDSTITTTTKSAASVYSSSIIPEENNDDDPVTPPVSPVRNSTVRRRQTLRDRIVDRDDAERTNIRRPPIPAEFGHEFPLRPTQPLPSNEIDRNVTSPNPKPEDSHHFQPPRQDTAPIRNIPSAPLGPPAPAPIPASASAYPPEKPTYTQSFPPSFMEVAHNGSILEQAWMMKMASEIARRIQDENSSAMGSYVGSGSGSGGFWDRSHTPPPAYRH</sequence>
<keyword id="KW-0445">Lipid transport</keyword>
<keyword id="KW-0446">Lipid-binding</keyword>
<keyword id="KW-0472">Membrane</keyword>
<keyword id="KW-0496">Mitochondrion</keyword>
<keyword id="KW-1000">Mitochondrion outer membrane</keyword>
<keyword id="KW-1185">Reference proteome</keyword>
<keyword id="KW-0812">Transmembrane</keyword>
<keyword id="KW-1134">Transmembrane beta strand</keyword>
<keyword id="KW-0813">Transport</keyword>